<sequence length="124" mass="13400">MSAGQTYYEFYRGSSIGTALTDALDELITQGDIPPQLAMRVLQQFDKSLTECLQKGVKNKTTIKGHLSTYRLCDDVWTFVVKDPQFKMEGVGAGSEMVTGSKIKIVACKSGDAADGKKAGGARE</sequence>
<protein>
    <recommendedName>
        <fullName>Transcription initiation factor IIA subunit 2</fullName>
    </recommendedName>
    <alternativeName>
        <fullName>General transcription factor IIA subunit 2</fullName>
    </alternativeName>
    <alternativeName>
        <fullName>Transcription initiation factor IIA small chain</fullName>
    </alternativeName>
</protein>
<dbReference type="EMBL" id="AE017347">
    <property type="protein sequence ID" value="AAW44439.2"/>
    <property type="molecule type" value="Genomic_DNA"/>
</dbReference>
<dbReference type="RefSeq" id="XP_571746.1">
    <property type="nucleotide sequence ID" value="XM_571746.1"/>
</dbReference>
<dbReference type="SMR" id="P0CR84"/>
<dbReference type="FunCoup" id="P0CR84">
    <property type="interactions" value="191"/>
</dbReference>
<dbReference type="STRING" id="214684.P0CR84"/>
<dbReference type="PaxDb" id="214684-P0CR84"/>
<dbReference type="eggNOG" id="KOG3463">
    <property type="taxonomic scope" value="Eukaryota"/>
</dbReference>
<dbReference type="HOGENOM" id="CLU_112964_3_1_1"/>
<dbReference type="InParanoid" id="P0CR84"/>
<dbReference type="Proteomes" id="UP000002149">
    <property type="component" value="Chromosome 7"/>
</dbReference>
<dbReference type="GO" id="GO:0005672">
    <property type="term" value="C:transcription factor TFIIA complex"/>
    <property type="evidence" value="ECO:0000318"/>
    <property type="project" value="GO_Central"/>
</dbReference>
<dbReference type="GO" id="GO:0000979">
    <property type="term" value="F:RNA polymerase II core promoter sequence-specific DNA binding"/>
    <property type="evidence" value="ECO:0007669"/>
    <property type="project" value="EnsemblFungi"/>
</dbReference>
<dbReference type="GO" id="GO:0016251">
    <property type="term" value="F:RNA polymerase II general transcription initiation factor activity"/>
    <property type="evidence" value="ECO:0000318"/>
    <property type="project" value="GO_Central"/>
</dbReference>
<dbReference type="GO" id="GO:0017025">
    <property type="term" value="F:TBP-class protein binding"/>
    <property type="evidence" value="ECO:0000318"/>
    <property type="project" value="GO_Central"/>
</dbReference>
<dbReference type="GO" id="GO:0060261">
    <property type="term" value="P:positive regulation of transcription initiation by RNA polymerase II"/>
    <property type="evidence" value="ECO:0007669"/>
    <property type="project" value="EnsemblFungi"/>
</dbReference>
<dbReference type="GO" id="GO:0051123">
    <property type="term" value="P:RNA polymerase II preinitiation complex assembly"/>
    <property type="evidence" value="ECO:0000318"/>
    <property type="project" value="GO_Central"/>
</dbReference>
<dbReference type="CDD" id="cd10014">
    <property type="entry name" value="TFIIA_gamma_C"/>
    <property type="match status" value="1"/>
</dbReference>
<dbReference type="CDD" id="cd10145">
    <property type="entry name" value="TFIIA_gamma_N"/>
    <property type="match status" value="1"/>
</dbReference>
<dbReference type="FunFam" id="1.10.287.190:FF:000001">
    <property type="entry name" value="Transcription initiation factor IIA subunit 2"/>
    <property type="match status" value="1"/>
</dbReference>
<dbReference type="FunFam" id="2.30.18.10:FF:000003">
    <property type="entry name" value="Transcription initiation factor IIA subunit 2"/>
    <property type="match status" value="1"/>
</dbReference>
<dbReference type="Gene3D" id="2.30.18.10">
    <property type="entry name" value="Transcription factor IIA (TFIIA), beta-barrel domain"/>
    <property type="match status" value="1"/>
</dbReference>
<dbReference type="Gene3D" id="1.10.287.190">
    <property type="entry name" value="Transcription factor IIA gamma subunit, alpha-helical domain"/>
    <property type="match status" value="1"/>
</dbReference>
<dbReference type="InterPro" id="IPR009083">
    <property type="entry name" value="TFIIA_a-hlx"/>
</dbReference>
<dbReference type="InterPro" id="IPR009088">
    <property type="entry name" value="TFIIA_b-brl"/>
</dbReference>
<dbReference type="InterPro" id="IPR003194">
    <property type="entry name" value="TFIIA_gsu"/>
</dbReference>
<dbReference type="InterPro" id="IPR015871">
    <property type="entry name" value="TFIIA_gsu_C"/>
</dbReference>
<dbReference type="InterPro" id="IPR015872">
    <property type="entry name" value="TFIIA_gsu_N"/>
</dbReference>
<dbReference type="PANTHER" id="PTHR10966">
    <property type="entry name" value="TRANSCRIPTION INITIATION FACTOR IIA SUBUNIT 2"/>
    <property type="match status" value="1"/>
</dbReference>
<dbReference type="Pfam" id="PF02751">
    <property type="entry name" value="TFIIA_gamma_C"/>
    <property type="match status" value="1"/>
</dbReference>
<dbReference type="Pfam" id="PF02268">
    <property type="entry name" value="TFIIA_gamma_N"/>
    <property type="match status" value="1"/>
</dbReference>
<dbReference type="PIRSF" id="PIRSF009415">
    <property type="entry name" value="Hum_TFIIA_gamma"/>
    <property type="match status" value="1"/>
</dbReference>
<dbReference type="SUPFAM" id="SSF47396">
    <property type="entry name" value="Transcription factor IIA (TFIIA), alpha-helical domain"/>
    <property type="match status" value="1"/>
</dbReference>
<dbReference type="SUPFAM" id="SSF50784">
    <property type="entry name" value="Transcription factor IIA (TFIIA), beta-barrel domain"/>
    <property type="match status" value="1"/>
</dbReference>
<feature type="chain" id="PRO_0000406207" description="Transcription initiation factor IIA subunit 2">
    <location>
        <begin position="1"/>
        <end position="124"/>
    </location>
</feature>
<gene>
    <name type="primary">TOA2</name>
    <name type="ordered locus">CNG00450</name>
</gene>
<reference key="1">
    <citation type="journal article" date="2005" name="Science">
        <title>The genome of the basidiomycetous yeast and human pathogen Cryptococcus neoformans.</title>
        <authorList>
            <person name="Loftus B.J."/>
            <person name="Fung E."/>
            <person name="Roncaglia P."/>
            <person name="Rowley D."/>
            <person name="Amedeo P."/>
            <person name="Bruno D."/>
            <person name="Vamathevan J."/>
            <person name="Miranda M."/>
            <person name="Anderson I.J."/>
            <person name="Fraser J.A."/>
            <person name="Allen J.E."/>
            <person name="Bosdet I.E."/>
            <person name="Brent M.R."/>
            <person name="Chiu R."/>
            <person name="Doering T.L."/>
            <person name="Donlin M.J."/>
            <person name="D'Souza C.A."/>
            <person name="Fox D.S."/>
            <person name="Grinberg V."/>
            <person name="Fu J."/>
            <person name="Fukushima M."/>
            <person name="Haas B.J."/>
            <person name="Huang J.C."/>
            <person name="Janbon G."/>
            <person name="Jones S.J.M."/>
            <person name="Koo H.L."/>
            <person name="Krzywinski M.I."/>
            <person name="Kwon-Chung K.J."/>
            <person name="Lengeler K.B."/>
            <person name="Maiti R."/>
            <person name="Marra M.A."/>
            <person name="Marra R.E."/>
            <person name="Mathewson C.A."/>
            <person name="Mitchell T.G."/>
            <person name="Pertea M."/>
            <person name="Riggs F.R."/>
            <person name="Salzberg S.L."/>
            <person name="Schein J.E."/>
            <person name="Shvartsbeyn A."/>
            <person name="Shin H."/>
            <person name="Shumway M."/>
            <person name="Specht C.A."/>
            <person name="Suh B.B."/>
            <person name="Tenney A."/>
            <person name="Utterback T.R."/>
            <person name="Wickes B.L."/>
            <person name="Wortman J.R."/>
            <person name="Wye N.H."/>
            <person name="Kronstad J.W."/>
            <person name="Lodge J.K."/>
            <person name="Heitman J."/>
            <person name="Davis R.W."/>
            <person name="Fraser C.M."/>
            <person name="Hyman R.W."/>
        </authorList>
    </citation>
    <scope>NUCLEOTIDE SEQUENCE [LARGE SCALE GENOMIC DNA]</scope>
    <source>
        <strain>JEC21 / ATCC MYA-565</strain>
    </source>
</reference>
<keyword id="KW-0539">Nucleus</keyword>
<keyword id="KW-1185">Reference proteome</keyword>
<keyword id="KW-0804">Transcription</keyword>
<keyword id="KW-0805">Transcription regulation</keyword>
<comment type="function">
    <text evidence="1">TFIIA is a component of the transcription machinery of RNA polymerase II and plays an important role in transcriptional activation. TFIIA in a complex with tbp mediates transcriptional activity (By similarity).</text>
</comment>
<comment type="subunit">
    <text evidence="1">TFIIA is a heterodimer composed of the large TOA1 and the small TOA2 subunits.</text>
</comment>
<comment type="subcellular location">
    <subcellularLocation>
        <location evidence="1">Nucleus</location>
    </subcellularLocation>
</comment>
<comment type="similarity">
    <text evidence="2">Belongs to the TFIIA subunit 2 family.</text>
</comment>
<evidence type="ECO:0000250" key="1"/>
<evidence type="ECO:0000305" key="2"/>
<proteinExistence type="inferred from homology"/>
<name>T2AG_CRYNJ</name>
<accession>P0CR84</accession>
<accession>Q55NX9</accession>
<accession>Q5KEI0</accession>
<organism>
    <name type="scientific">Cryptococcus neoformans var. neoformans serotype D (strain JEC21 / ATCC MYA-565)</name>
    <name type="common">Filobasidiella neoformans</name>
    <dbReference type="NCBI Taxonomy" id="214684"/>
    <lineage>
        <taxon>Eukaryota</taxon>
        <taxon>Fungi</taxon>
        <taxon>Dikarya</taxon>
        <taxon>Basidiomycota</taxon>
        <taxon>Agaricomycotina</taxon>
        <taxon>Tremellomycetes</taxon>
        <taxon>Tremellales</taxon>
        <taxon>Cryptococcaceae</taxon>
        <taxon>Cryptococcus</taxon>
        <taxon>Cryptococcus neoformans species complex</taxon>
    </lineage>
</organism>